<comment type="function">
    <text evidence="1">Channel that opens in response to stretch forces in the membrane lipid bilayer. May participate in the regulation of osmotic pressure changes within the cell.</text>
</comment>
<comment type="subunit">
    <text evidence="1">Homopentamer.</text>
</comment>
<comment type="subcellular location">
    <subcellularLocation>
        <location evidence="1">Cell inner membrane</location>
        <topology evidence="1">Multi-pass membrane protein</topology>
    </subcellularLocation>
</comment>
<comment type="similarity">
    <text evidence="1">Belongs to the MscL family.</text>
</comment>
<evidence type="ECO:0000255" key="1">
    <source>
        <dbReference type="HAMAP-Rule" id="MF_00115"/>
    </source>
</evidence>
<protein>
    <recommendedName>
        <fullName evidence="1">Large-conductance mechanosensitive channel</fullName>
    </recommendedName>
</protein>
<feature type="chain" id="PRO_1000015381" description="Large-conductance mechanosensitive channel">
    <location>
        <begin position="1"/>
        <end position="128"/>
    </location>
</feature>
<feature type="transmembrane region" description="Helical" evidence="1">
    <location>
        <begin position="10"/>
        <end position="30"/>
    </location>
</feature>
<feature type="transmembrane region" description="Helical" evidence="1">
    <location>
        <begin position="76"/>
        <end position="96"/>
    </location>
</feature>
<keyword id="KW-0997">Cell inner membrane</keyword>
<keyword id="KW-1003">Cell membrane</keyword>
<keyword id="KW-0407">Ion channel</keyword>
<keyword id="KW-0406">Ion transport</keyword>
<keyword id="KW-0472">Membrane</keyword>
<keyword id="KW-0812">Transmembrane</keyword>
<keyword id="KW-1133">Transmembrane helix</keyword>
<keyword id="KW-0813">Transport</keyword>
<sequence length="128" mass="14252">MNFIKEFREFAMRGNVVDMAVGVIIGSAFGKIVSSLVSDIFMPVLGILTGGIDFKDMKFVLAQAQGDVPAVTLNYGLFIQNVIDFIIIAFAIFMMIKVINKVRKPEEKKPVPKAETLLTEIRDLLKNK</sequence>
<organism>
    <name type="scientific">Haemophilus influenzae (strain PittEE)</name>
    <dbReference type="NCBI Taxonomy" id="374930"/>
    <lineage>
        <taxon>Bacteria</taxon>
        <taxon>Pseudomonadati</taxon>
        <taxon>Pseudomonadota</taxon>
        <taxon>Gammaproteobacteria</taxon>
        <taxon>Pasteurellales</taxon>
        <taxon>Pasteurellaceae</taxon>
        <taxon>Haemophilus</taxon>
    </lineage>
</organism>
<dbReference type="EMBL" id="CP000671">
    <property type="protein sequence ID" value="ABQ99111.1"/>
    <property type="molecule type" value="Genomic_DNA"/>
</dbReference>
<dbReference type="SMR" id="A5UEB0"/>
<dbReference type="KEGG" id="hip:CGSHiEE_09100"/>
<dbReference type="HOGENOM" id="CLU_095787_0_0_6"/>
<dbReference type="GO" id="GO:0005886">
    <property type="term" value="C:plasma membrane"/>
    <property type="evidence" value="ECO:0007669"/>
    <property type="project" value="UniProtKB-SubCell"/>
</dbReference>
<dbReference type="GO" id="GO:0008381">
    <property type="term" value="F:mechanosensitive monoatomic ion channel activity"/>
    <property type="evidence" value="ECO:0007669"/>
    <property type="project" value="UniProtKB-UniRule"/>
</dbReference>
<dbReference type="FunFam" id="1.10.1200.120:FF:000001">
    <property type="entry name" value="Large-conductance mechanosensitive channel"/>
    <property type="match status" value="1"/>
</dbReference>
<dbReference type="Gene3D" id="1.10.1200.120">
    <property type="entry name" value="Large-conductance mechanosensitive channel, MscL, domain 1"/>
    <property type="match status" value="1"/>
</dbReference>
<dbReference type="HAMAP" id="MF_00115">
    <property type="entry name" value="MscL"/>
    <property type="match status" value="1"/>
</dbReference>
<dbReference type="InterPro" id="IPR019823">
    <property type="entry name" value="Mechanosensitive_channel_CS"/>
</dbReference>
<dbReference type="InterPro" id="IPR001185">
    <property type="entry name" value="MS_channel"/>
</dbReference>
<dbReference type="InterPro" id="IPR037673">
    <property type="entry name" value="MSC/AndL"/>
</dbReference>
<dbReference type="InterPro" id="IPR036019">
    <property type="entry name" value="MscL_channel"/>
</dbReference>
<dbReference type="NCBIfam" id="TIGR00220">
    <property type="entry name" value="mscL"/>
    <property type="match status" value="1"/>
</dbReference>
<dbReference type="NCBIfam" id="NF001843">
    <property type="entry name" value="PRK00567.1-4"/>
    <property type="match status" value="1"/>
</dbReference>
<dbReference type="PANTHER" id="PTHR30266:SF2">
    <property type="entry name" value="LARGE-CONDUCTANCE MECHANOSENSITIVE CHANNEL"/>
    <property type="match status" value="1"/>
</dbReference>
<dbReference type="PANTHER" id="PTHR30266">
    <property type="entry name" value="MECHANOSENSITIVE CHANNEL MSCL"/>
    <property type="match status" value="1"/>
</dbReference>
<dbReference type="Pfam" id="PF01741">
    <property type="entry name" value="MscL"/>
    <property type="match status" value="1"/>
</dbReference>
<dbReference type="PRINTS" id="PR01264">
    <property type="entry name" value="MECHCHANNEL"/>
</dbReference>
<dbReference type="SUPFAM" id="SSF81330">
    <property type="entry name" value="Gated mechanosensitive channel"/>
    <property type="match status" value="1"/>
</dbReference>
<dbReference type="PROSITE" id="PS01327">
    <property type="entry name" value="MSCL"/>
    <property type="match status" value="1"/>
</dbReference>
<accession>A5UEB0</accession>
<reference key="1">
    <citation type="journal article" date="2007" name="Genome Biol.">
        <title>Characterization and modeling of the Haemophilus influenzae core and supragenomes based on the complete genomic sequences of Rd and 12 clinical nontypeable strains.</title>
        <authorList>
            <person name="Hogg J.S."/>
            <person name="Hu F.Z."/>
            <person name="Janto B."/>
            <person name="Boissy R."/>
            <person name="Hayes J."/>
            <person name="Keefe R."/>
            <person name="Post J.C."/>
            <person name="Ehrlich G.D."/>
        </authorList>
    </citation>
    <scope>NUCLEOTIDE SEQUENCE [LARGE SCALE GENOMIC DNA]</scope>
    <source>
        <strain>PittEE</strain>
    </source>
</reference>
<name>MSCL_HAEIE</name>
<gene>
    <name evidence="1" type="primary">mscL</name>
    <name type="ordered locus">CGSHiEE_09100</name>
</gene>
<proteinExistence type="inferred from homology"/>